<comment type="function">
    <text evidence="6">Required to deliver LXG toxins to target cells.</text>
</comment>
<comment type="subunit">
    <text evidence="3 5">Homodimer.</text>
</comment>
<comment type="subcellular location">
    <subcellularLocation>
        <location evidence="3 4 5">Secreted</location>
    </subcellularLocation>
    <text evidence="3 4 5">Secreted via the ESX/ESAT-6-like secretion system (BsEss) / type VII secretion system (T7SS) (PubMed:23861817, PubMed:24798022). Can be secreted as a dimer (PubMed:24828531).</text>
</comment>
<comment type="induction">
    <text evidence="3">Positively regulated by phosphorylated DegU.</text>
</comment>
<comment type="domain">
    <text evidence="5">The WXG motif and the C-terminal tail are crucial for secretion.</text>
</comment>
<comment type="disruption phenotype">
    <text evidence="2 6">Cells lacking this gene display an increased bacteriophage SPP1 resistance phenotype (PubMed:15576783). Loss of delivery of LXG type toxins to target cells (PubMed:34280190).</text>
</comment>
<comment type="similarity">
    <text evidence="7">Belongs to the WXG100 family. sagEsxA-like subfamily.</text>
</comment>
<comment type="sequence caution" evidence="7">
    <conflict type="erroneous initiation">
        <sequence resource="EMBL-CDS" id="CAB04773"/>
    </conflict>
    <text>Extended N-terminus.</text>
</comment>
<comment type="sequence caution" evidence="7">
    <conflict type="frameshift">
        <sequence resource="EMBL-CDS" id="CAB04773"/>
    </conflict>
</comment>
<feature type="chain" id="PRO_0000383635" description="Protein YukE">
    <location>
        <begin position="1"/>
        <end position="97"/>
    </location>
</feature>
<feature type="coiled-coil region" evidence="1">
    <location>
        <begin position="21"/>
        <end position="94"/>
    </location>
</feature>
<feature type="mutagenesis site" description="Lack of secretion, but does not affect dimerization." evidence="5">
    <original>W</original>
    <variation>A</variation>
    <location>
        <position position="44"/>
    </location>
</feature>
<feature type="mutagenesis site" description="Lack of secretion." evidence="5">
    <original>W</original>
    <variation>E</variation>
    <variation>G</variation>
    <variation>P</variation>
    <variation>R</variation>
    <location>
        <position position="44"/>
    </location>
</feature>
<feature type="mutagenesis site" description="Strong decrease in secretion." evidence="5">
    <original>W</original>
    <variation>F</variation>
    <variation>Y</variation>
    <location>
        <position position="44"/>
    </location>
</feature>
<feature type="mutagenesis site" description="Does not affect secretion and dimerization." evidence="5">
    <original>E</original>
    <variation>A</variation>
    <location>
        <position position="45"/>
    </location>
</feature>
<feature type="mutagenesis site" description="Does not affect secretion." evidence="5">
    <original>E</original>
    <variation>D</variation>
    <variation>K</variation>
    <variation>Q</variation>
    <variation>R</variation>
    <location>
        <position position="45"/>
    </location>
</feature>
<feature type="mutagenesis site" description="Strong decrease in secretion." evidence="5">
    <original>E</original>
    <variation>G</variation>
    <location>
        <position position="45"/>
    </location>
</feature>
<feature type="mutagenesis site" description="Lack of secretion, but does not affect dimerization." evidence="5">
    <original>G</original>
    <variation>A</variation>
    <location>
        <position position="46"/>
    </location>
</feature>
<feature type="mutagenesis site" description="Lack of secretion." evidence="5">
    <original>G</original>
    <variation>P</variation>
    <variation>R</variation>
    <location>
        <position position="46"/>
    </location>
</feature>
<evidence type="ECO:0000255" key="1"/>
<evidence type="ECO:0000269" key="2">
    <source>
    </source>
</evidence>
<evidence type="ECO:0000269" key="3">
    <source>
    </source>
</evidence>
<evidence type="ECO:0000269" key="4">
    <source>
    </source>
</evidence>
<evidence type="ECO:0000269" key="5">
    <source>
    </source>
</evidence>
<evidence type="ECO:0000269" key="6">
    <source>
    </source>
</evidence>
<evidence type="ECO:0000305" key="7"/>
<dbReference type="EMBL" id="Z82015">
    <property type="protein sequence ID" value="CAB04773.1"/>
    <property type="status" value="ALT_SEQ"/>
    <property type="molecule type" value="Genomic_DNA"/>
</dbReference>
<dbReference type="EMBL" id="AL009126">
    <property type="protein sequence ID" value="CAB15179.2"/>
    <property type="molecule type" value="Genomic_DNA"/>
</dbReference>
<dbReference type="PIR" id="G70013">
    <property type="entry name" value="G70013"/>
</dbReference>
<dbReference type="RefSeq" id="NP_391069.2">
    <property type="nucleotide sequence ID" value="NC_000964.3"/>
</dbReference>
<dbReference type="RefSeq" id="WP_003220661.1">
    <property type="nucleotide sequence ID" value="NZ_OZ025638.1"/>
</dbReference>
<dbReference type="SMR" id="C0SP85"/>
<dbReference type="FunCoup" id="C0SP85">
    <property type="interactions" value="2"/>
</dbReference>
<dbReference type="STRING" id="224308.BSU31910"/>
<dbReference type="jPOST" id="C0SP85"/>
<dbReference type="PaxDb" id="224308-BSU31910"/>
<dbReference type="EnsemblBacteria" id="CAB15179">
    <property type="protein sequence ID" value="CAB15179"/>
    <property type="gene ID" value="BSU_31910"/>
</dbReference>
<dbReference type="GeneID" id="936578"/>
<dbReference type="KEGG" id="bsu:BSU31910"/>
<dbReference type="PATRIC" id="fig|224308.179.peg.3456"/>
<dbReference type="eggNOG" id="COG4842">
    <property type="taxonomic scope" value="Bacteria"/>
</dbReference>
<dbReference type="InParanoid" id="C0SP85"/>
<dbReference type="OrthoDB" id="4978934at2"/>
<dbReference type="PhylomeDB" id="C0SP85"/>
<dbReference type="BioCyc" id="BSUB:BSU31910-MONOMER"/>
<dbReference type="PRO" id="PR:C0SP85"/>
<dbReference type="Proteomes" id="UP000001570">
    <property type="component" value="Chromosome"/>
</dbReference>
<dbReference type="GO" id="GO:0005576">
    <property type="term" value="C:extracellular region"/>
    <property type="evidence" value="ECO:0007669"/>
    <property type="project" value="UniProtKB-SubCell"/>
</dbReference>
<dbReference type="Gene3D" id="1.10.287.1060">
    <property type="entry name" value="ESAT-6-like"/>
    <property type="match status" value="1"/>
</dbReference>
<dbReference type="InterPro" id="IPR036689">
    <property type="entry name" value="ESAT-6-like_sf"/>
</dbReference>
<dbReference type="InterPro" id="IPR010310">
    <property type="entry name" value="T7SS_ESAT-6-like"/>
</dbReference>
<dbReference type="NCBIfam" id="TIGR03930">
    <property type="entry name" value="WXG100_ESAT6"/>
    <property type="match status" value="1"/>
</dbReference>
<dbReference type="Pfam" id="PF06013">
    <property type="entry name" value="WXG100"/>
    <property type="match status" value="1"/>
</dbReference>
<dbReference type="SUPFAM" id="SSF140453">
    <property type="entry name" value="EsxAB dimer-like"/>
    <property type="match status" value="1"/>
</dbReference>
<name>YUKE_BACSU</name>
<reference key="1">
    <citation type="journal article" date="1997" name="Microbiology">
        <title>A 12kb nucleotide sequence containing the alanine dehydrogenase gene at 279 degree on the Bacillus subtilis chromosome.</title>
        <authorList>
            <person name="Oudega B."/>
            <person name="Vandenbol M."/>
            <person name="Koningstein G."/>
        </authorList>
    </citation>
    <scope>NUCLEOTIDE SEQUENCE [GENOMIC DNA]</scope>
    <source>
        <strain>168</strain>
    </source>
</reference>
<reference key="2">
    <citation type="journal article" date="1997" name="Nature">
        <title>The complete genome sequence of the Gram-positive bacterium Bacillus subtilis.</title>
        <authorList>
            <person name="Kunst F."/>
            <person name="Ogasawara N."/>
            <person name="Moszer I."/>
            <person name="Albertini A.M."/>
            <person name="Alloni G."/>
            <person name="Azevedo V."/>
            <person name="Bertero M.G."/>
            <person name="Bessieres P."/>
            <person name="Bolotin A."/>
            <person name="Borchert S."/>
            <person name="Borriss R."/>
            <person name="Boursier L."/>
            <person name="Brans A."/>
            <person name="Braun M."/>
            <person name="Brignell S.C."/>
            <person name="Bron S."/>
            <person name="Brouillet S."/>
            <person name="Bruschi C.V."/>
            <person name="Caldwell B."/>
            <person name="Capuano V."/>
            <person name="Carter N.M."/>
            <person name="Choi S.-K."/>
            <person name="Codani J.-J."/>
            <person name="Connerton I.F."/>
            <person name="Cummings N.J."/>
            <person name="Daniel R.A."/>
            <person name="Denizot F."/>
            <person name="Devine K.M."/>
            <person name="Duesterhoeft A."/>
            <person name="Ehrlich S.D."/>
            <person name="Emmerson P.T."/>
            <person name="Entian K.-D."/>
            <person name="Errington J."/>
            <person name="Fabret C."/>
            <person name="Ferrari E."/>
            <person name="Foulger D."/>
            <person name="Fritz C."/>
            <person name="Fujita M."/>
            <person name="Fujita Y."/>
            <person name="Fuma S."/>
            <person name="Galizzi A."/>
            <person name="Galleron N."/>
            <person name="Ghim S.-Y."/>
            <person name="Glaser P."/>
            <person name="Goffeau A."/>
            <person name="Golightly E.J."/>
            <person name="Grandi G."/>
            <person name="Guiseppi G."/>
            <person name="Guy B.J."/>
            <person name="Haga K."/>
            <person name="Haiech J."/>
            <person name="Harwood C.R."/>
            <person name="Henaut A."/>
            <person name="Hilbert H."/>
            <person name="Holsappel S."/>
            <person name="Hosono S."/>
            <person name="Hullo M.-F."/>
            <person name="Itaya M."/>
            <person name="Jones L.-M."/>
            <person name="Joris B."/>
            <person name="Karamata D."/>
            <person name="Kasahara Y."/>
            <person name="Klaerr-Blanchard M."/>
            <person name="Klein C."/>
            <person name="Kobayashi Y."/>
            <person name="Koetter P."/>
            <person name="Koningstein G."/>
            <person name="Krogh S."/>
            <person name="Kumano M."/>
            <person name="Kurita K."/>
            <person name="Lapidus A."/>
            <person name="Lardinois S."/>
            <person name="Lauber J."/>
            <person name="Lazarevic V."/>
            <person name="Lee S.-M."/>
            <person name="Levine A."/>
            <person name="Liu H."/>
            <person name="Masuda S."/>
            <person name="Mauel C."/>
            <person name="Medigue C."/>
            <person name="Medina N."/>
            <person name="Mellado R.P."/>
            <person name="Mizuno M."/>
            <person name="Moestl D."/>
            <person name="Nakai S."/>
            <person name="Noback M."/>
            <person name="Noone D."/>
            <person name="O'Reilly M."/>
            <person name="Ogawa K."/>
            <person name="Ogiwara A."/>
            <person name="Oudega B."/>
            <person name="Park S.-H."/>
            <person name="Parro V."/>
            <person name="Pohl T.M."/>
            <person name="Portetelle D."/>
            <person name="Porwollik S."/>
            <person name="Prescott A.M."/>
            <person name="Presecan E."/>
            <person name="Pujic P."/>
            <person name="Purnelle B."/>
            <person name="Rapoport G."/>
            <person name="Rey M."/>
            <person name="Reynolds S."/>
            <person name="Rieger M."/>
            <person name="Rivolta C."/>
            <person name="Rocha E."/>
            <person name="Roche B."/>
            <person name="Rose M."/>
            <person name="Sadaie Y."/>
            <person name="Sato T."/>
            <person name="Scanlan E."/>
            <person name="Schleich S."/>
            <person name="Schroeter R."/>
            <person name="Scoffone F."/>
            <person name="Sekiguchi J."/>
            <person name="Sekowska A."/>
            <person name="Seror S.J."/>
            <person name="Serror P."/>
            <person name="Shin B.-S."/>
            <person name="Soldo B."/>
            <person name="Sorokin A."/>
            <person name="Tacconi E."/>
            <person name="Takagi T."/>
            <person name="Takahashi H."/>
            <person name="Takemaru K."/>
            <person name="Takeuchi M."/>
            <person name="Tamakoshi A."/>
            <person name="Tanaka T."/>
            <person name="Terpstra P."/>
            <person name="Tognoni A."/>
            <person name="Tosato V."/>
            <person name="Uchiyama S."/>
            <person name="Vandenbol M."/>
            <person name="Vannier F."/>
            <person name="Vassarotti A."/>
            <person name="Viari A."/>
            <person name="Wambutt R."/>
            <person name="Wedler E."/>
            <person name="Wedler H."/>
            <person name="Weitzenegger T."/>
            <person name="Winters P."/>
            <person name="Wipat A."/>
            <person name="Yamamoto H."/>
            <person name="Yamane K."/>
            <person name="Yasumoto K."/>
            <person name="Yata K."/>
            <person name="Yoshida K."/>
            <person name="Yoshikawa H.-F."/>
            <person name="Zumstein E."/>
            <person name="Yoshikawa H."/>
            <person name="Danchin A."/>
        </authorList>
    </citation>
    <scope>NUCLEOTIDE SEQUENCE [LARGE SCALE GENOMIC DNA]</scope>
    <source>
        <strain>168</strain>
    </source>
</reference>
<reference key="3">
    <citation type="journal article" date="2009" name="Microbiology">
        <title>From a consortium sequence to a unified sequence: the Bacillus subtilis 168 reference genome a decade later.</title>
        <authorList>
            <person name="Barbe V."/>
            <person name="Cruveiller S."/>
            <person name="Kunst F."/>
            <person name="Lenoble P."/>
            <person name="Meurice G."/>
            <person name="Sekowska A."/>
            <person name="Vallenet D."/>
            <person name="Wang T."/>
            <person name="Moszer I."/>
            <person name="Medigue C."/>
            <person name="Danchin A."/>
        </authorList>
    </citation>
    <scope>SEQUENCE REVISION</scope>
</reference>
<reference key="4">
    <citation type="journal article" date="2004" name="J. Bacteriol.">
        <title>Bacillus subtilis operon encoding a membrane receptor for bacteriophage SPP1.</title>
        <authorList>
            <person name="Sao-Jose C."/>
            <person name="Baptista C."/>
            <person name="Santos M.A."/>
        </authorList>
    </citation>
    <scope>DISRUPTION PHENOTYPE</scope>
    <source>
        <strain>168</strain>
    </source>
</reference>
<reference key="5">
    <citation type="journal article" date="2013" name="PLoS ONE">
        <title>High levels of DegU-P activate an Esat-6-like secretion system in Bacillus subtilis.</title>
        <authorList>
            <person name="Baptista C."/>
            <person name="Barreto H.C."/>
            <person name="Sao-Jose C."/>
        </authorList>
    </citation>
    <scope>SUBUNIT</scope>
    <scope>SUBCELLULAR LOCATION</scope>
    <scope>INDUCTION</scope>
    <source>
        <strain>ATCC 6051</strain>
    </source>
</reference>
<reference key="6">
    <citation type="journal article" date="2014" name="PLoS ONE">
        <title>The ESX system in Bacillus subtilis mediates protein secretion.</title>
        <authorList>
            <person name="Huppert L.A."/>
            <person name="Ramsdell T.L."/>
            <person name="Chase M.R."/>
            <person name="Sarracino D.A."/>
            <person name="Fortune S.M."/>
            <person name="Burton B.M."/>
        </authorList>
    </citation>
    <scope>SUBCELLULAR LOCATION</scope>
    <source>
        <strain>168 / PY79</strain>
    </source>
</reference>
<reference key="7">
    <citation type="journal article" date="2014" name="Proc. Natl. Acad. Sci. U.S.A.">
        <title>Dimer recognition and secretion by the ESX secretion system in Bacillus subtilis.</title>
        <authorList>
            <person name="Sysoeva T.A."/>
            <person name="Zepeda-Rivera M.A."/>
            <person name="Huppert L.A."/>
            <person name="Burton B.M."/>
        </authorList>
    </citation>
    <scope>SUBUNIT</scope>
    <scope>SUBCELLULAR LOCATION</scope>
    <scope>DOMAIN</scope>
    <scope>MUTAGENESIS OF TRP-44; GLU-45 AND GLY-46</scope>
</reference>
<reference key="8">
    <citation type="journal article" date="2021" name="PLoS Genet.">
        <title>Diverse LXG toxin and antitoxin systems specifically mediate intraspecies competition in Bacillus subtilis biofilms.</title>
        <authorList>
            <person name="Kobayashi K."/>
        </authorList>
    </citation>
    <scope>FUNCTION</scope>
    <scope>DISRUPTION PHENOTYPE</scope>
    <source>
        <strain>168 / Marburg / ATCC 6051 / DSM 10 / JCM 1465 / NBRC 13719 / NCIMB 3610 / NRRL NRS-744 / VKM B-501</strain>
    </source>
</reference>
<organism>
    <name type="scientific">Bacillus subtilis (strain 168)</name>
    <dbReference type="NCBI Taxonomy" id="224308"/>
    <lineage>
        <taxon>Bacteria</taxon>
        <taxon>Bacillati</taxon>
        <taxon>Bacillota</taxon>
        <taxon>Bacilli</taxon>
        <taxon>Bacillales</taxon>
        <taxon>Bacillaceae</taxon>
        <taxon>Bacillus</taxon>
    </lineage>
</organism>
<sequence length="97" mass="10993">MAGLIRVTPEELRAMAKQYGVESQEVLNQVDRLNRMISDLKSMWEGASSEAFADQYEQLKPSFIKMSDLLQDVNQQLDQTANTLESTDQDIANQIRG</sequence>
<gene>
    <name type="primary">yukE</name>
    <name type="ordered locus">BSU31910</name>
</gene>
<keyword id="KW-0175">Coiled coil</keyword>
<keyword id="KW-1185">Reference proteome</keyword>
<keyword id="KW-0964">Secreted</keyword>
<accession>C0SP85</accession>
<accession>P71072</accession>
<accession>Q795L2</accession>
<protein>
    <recommendedName>
        <fullName evidence="7">Protein YukE</fullName>
    </recommendedName>
</protein>
<proteinExistence type="evidence at protein level"/>